<proteinExistence type="evidence at protein level"/>
<accession>A0A858E899</accession>
<sequence>MSIYDDIFKQFPMIDEWSDSDEKILVEPYTYLGINTAKELPSMVTKAFNHWYQVPQPALDIILQIIGPIHAASLLLDDIQDDSDLRGGNPVAHKVYGVAQTINTATYVCFDAYHKVSQLTPFLKSPETTDLWSIINDEIAALHRGQGIELYWRDSLMCPTEEEYLRMIHNKTGAIFRLPIKLLQALSSVDSPPDCFPLLNIVGILFQIQNDISSLSPDFTKDKGFCEDFSEGKFSFPIIHSVKADSSNSLLMDILRLRPKDEATKRKALRFMKDQTKSLDHTFHVLCKLKKTAQEELEKLGGNSELSSILERIQVSPTPEIEDR</sequence>
<gene>
    <name evidence="3" type="primary">ILTPS3</name>
</gene>
<keyword id="KW-0456">Lyase</keyword>
<keyword id="KW-0460">Magnesium</keyword>
<keyword id="KW-0479">Metal-binding</keyword>
<protein>
    <recommendedName>
        <fullName evidence="3">IDS-like terpene synthase 3</fullName>
        <shortName evidence="3">ILTPS3</shortName>
        <ecNumber evidence="2">4.2.3.-</ecNumber>
    </recommendedName>
</protein>
<name>TPS3_MELLI</name>
<feature type="chain" id="PRO_0000457156" description="IDS-like terpene synthase 3">
    <location>
        <begin position="1"/>
        <end position="324"/>
    </location>
</feature>
<feature type="binding site" evidence="1">
    <location>
        <position position="77"/>
    </location>
    <ligand>
        <name>Mg(2+)</name>
        <dbReference type="ChEBI" id="CHEBI:18420"/>
        <label>1</label>
    </ligand>
</feature>
<feature type="binding site" evidence="1">
    <location>
        <position position="77"/>
    </location>
    <ligand>
        <name>Mg(2+)</name>
        <dbReference type="ChEBI" id="CHEBI:18420"/>
        <label>2</label>
    </ligand>
</feature>
<feature type="binding site" evidence="1">
    <location>
        <position position="81"/>
    </location>
    <ligand>
        <name>Mg(2+)</name>
        <dbReference type="ChEBI" id="CHEBI:18420"/>
        <label>1</label>
    </ligand>
</feature>
<feature type="binding site" evidence="1">
    <location>
        <position position="81"/>
    </location>
    <ligand>
        <name>Mg(2+)</name>
        <dbReference type="ChEBI" id="CHEBI:18420"/>
        <label>2</label>
    </ligand>
</feature>
<organism>
    <name type="scientific">Melampsora lini</name>
    <name type="common">Rust fungus</name>
    <dbReference type="NCBI Taxonomy" id="5261"/>
    <lineage>
        <taxon>Eukaryota</taxon>
        <taxon>Fungi</taxon>
        <taxon>Dikarya</taxon>
        <taxon>Basidiomycota</taxon>
        <taxon>Pucciniomycotina</taxon>
        <taxon>Pucciniomycetes</taxon>
        <taxon>Pucciniales</taxon>
        <taxon>Melampsoraceae</taxon>
        <taxon>Melampsora</taxon>
    </lineage>
</organism>
<evidence type="ECO:0000250" key="1">
    <source>
        <dbReference type="UniProtKB" id="Q12051"/>
    </source>
</evidence>
<evidence type="ECO:0000269" key="2">
    <source>
    </source>
</evidence>
<evidence type="ECO:0000303" key="3">
    <source>
    </source>
</evidence>
<evidence type="ECO:0000305" key="4"/>
<comment type="function">
    <text evidence="2">Terpene synthase that shows monoterpene synthase activity and produces linalool, using geranyl diphosphate (GPP) as substrate (PubMed:32913319). Also shows sesquiterpene synthase activity as it is able to convert farnesyl diphosphate (FPP) into (E)-nerolidol (PubMed:32913319).</text>
</comment>
<comment type="catalytic activity">
    <reaction evidence="2">
        <text>(2E)-geranyl diphosphate + H2O = linalool + diphosphate</text>
        <dbReference type="Rhea" id="RHEA:68708"/>
        <dbReference type="ChEBI" id="CHEBI:15377"/>
        <dbReference type="ChEBI" id="CHEBI:17580"/>
        <dbReference type="ChEBI" id="CHEBI:33019"/>
        <dbReference type="ChEBI" id="CHEBI:58057"/>
    </reaction>
    <physiologicalReaction direction="left-to-right" evidence="2">
        <dbReference type="Rhea" id="RHEA:68709"/>
    </physiologicalReaction>
</comment>
<comment type="catalytic activity">
    <reaction evidence="2">
        <text>(2E,6E)-farnesyl diphosphate + H2O = (6E)-nerolidol + diphosphate</text>
        <dbReference type="Rhea" id="RHEA:56984"/>
        <dbReference type="ChEBI" id="CHEBI:15377"/>
        <dbReference type="ChEBI" id="CHEBI:33019"/>
        <dbReference type="ChEBI" id="CHEBI:141283"/>
        <dbReference type="ChEBI" id="CHEBI:175763"/>
    </reaction>
    <physiologicalReaction direction="left-to-right" evidence="2">
        <dbReference type="Rhea" id="RHEA:56985"/>
    </physiologicalReaction>
</comment>
<comment type="cofactor">
    <cofactor evidence="1">
        <name>Mg(2+)</name>
        <dbReference type="ChEBI" id="CHEBI:18420"/>
    </cofactor>
    <text evidence="1">Binds 2 Mg(2+) ions per subunit.</text>
</comment>
<comment type="biophysicochemical properties">
    <kinetics>
        <KM evidence="2">1.6 uM for farnesyl diphosphate</KM>
    </kinetics>
</comment>
<comment type="miscellaneous">
    <text evidence="2">IDS-like terpene synthases originate from a geranylgeranyl diphosphate synthase (GGDPS) progenitor in fungi, after the split of Melampsora from other genera within the class of pucciniomycetes. They lack coupling activity and act as classical terpene synthases.</text>
</comment>
<comment type="similarity">
    <text evidence="4">Belongs to the FPP/GGPP synthase family.</text>
</comment>
<dbReference type="EC" id="4.2.3.-" evidence="2"/>
<dbReference type="EMBL" id="MK946443">
    <property type="protein sequence ID" value="QIG55795.1"/>
    <property type="molecule type" value="mRNA"/>
</dbReference>
<dbReference type="SMR" id="A0A858E899"/>
<dbReference type="GO" id="GO:0016829">
    <property type="term" value="F:lyase activity"/>
    <property type="evidence" value="ECO:0007669"/>
    <property type="project" value="UniProtKB-KW"/>
</dbReference>
<dbReference type="GO" id="GO:0046872">
    <property type="term" value="F:metal ion binding"/>
    <property type="evidence" value="ECO:0007669"/>
    <property type="project" value="UniProtKB-KW"/>
</dbReference>
<dbReference type="GO" id="GO:0004659">
    <property type="term" value="F:prenyltransferase activity"/>
    <property type="evidence" value="ECO:0007669"/>
    <property type="project" value="InterPro"/>
</dbReference>
<dbReference type="GO" id="GO:0008299">
    <property type="term" value="P:isoprenoid biosynthetic process"/>
    <property type="evidence" value="ECO:0007669"/>
    <property type="project" value="InterPro"/>
</dbReference>
<dbReference type="CDD" id="cd00867">
    <property type="entry name" value="Trans_IPPS"/>
    <property type="match status" value="1"/>
</dbReference>
<dbReference type="Gene3D" id="1.10.600.10">
    <property type="entry name" value="Farnesyl Diphosphate Synthase"/>
    <property type="match status" value="1"/>
</dbReference>
<dbReference type="InterPro" id="IPR008949">
    <property type="entry name" value="Isoprenoid_synthase_dom_sf"/>
</dbReference>
<dbReference type="InterPro" id="IPR000092">
    <property type="entry name" value="Polyprenyl_synt"/>
</dbReference>
<dbReference type="PANTHER" id="PTHR12001">
    <property type="entry name" value="GERANYLGERANYL PYROPHOSPHATE SYNTHASE"/>
    <property type="match status" value="1"/>
</dbReference>
<dbReference type="PANTHER" id="PTHR12001:SF44">
    <property type="entry name" value="GERANYLGERANYL PYROPHOSPHATE SYNTHASE"/>
    <property type="match status" value="1"/>
</dbReference>
<dbReference type="Pfam" id="PF00348">
    <property type="entry name" value="polyprenyl_synt"/>
    <property type="match status" value="1"/>
</dbReference>
<dbReference type="SFLD" id="SFLDS00005">
    <property type="entry name" value="Isoprenoid_Synthase_Type_I"/>
    <property type="match status" value="1"/>
</dbReference>
<dbReference type="SUPFAM" id="SSF48576">
    <property type="entry name" value="Terpenoid synthases"/>
    <property type="match status" value="1"/>
</dbReference>
<reference key="1">
    <citation type="journal article" date="2020" name="Sci. Rep.">
        <title>Evolution of isoprenyl diphosphate synthase-like terpene synthases in fungi.</title>
        <authorList>
            <person name="Wei G."/>
            <person name="Eberl F."/>
            <person name="Chen X."/>
            <person name="Zhang C."/>
            <person name="Unsicker S.B."/>
            <person name="Koellner T.G."/>
            <person name="Gershenzon J."/>
            <person name="Chen F."/>
        </authorList>
    </citation>
    <scope>NUCLEOTIDE SEQUENCE [MRNA]</scope>
    <scope>FUNCTION</scope>
    <scope>CATALYTIC ACTIVITY</scope>
    <scope>BIOPHYSICOCHEMICAL PROPERTIES</scope>
</reference>